<gene>
    <name type="primary">hinT</name>
    <name type="ordered locus">SF1107</name>
    <name type="ordered locus">S1187</name>
</gene>
<protein>
    <recommendedName>
        <fullName evidence="1">Purine nucleoside phosphoramidase</fullName>
        <ecNumber evidence="1">3.9.1.-</ecNumber>
    </recommendedName>
    <alternativeName>
        <fullName>Histidine triad nucleotide binding protein HinT</fullName>
        <shortName>HIT protein</shortName>
    </alternativeName>
</protein>
<keyword id="KW-0378">Hydrolase</keyword>
<keyword id="KW-0547">Nucleotide-binding</keyword>
<keyword id="KW-1185">Reference proteome</keyword>
<evidence type="ECO:0000250" key="1">
    <source>
        <dbReference type="UniProtKB" id="P0ACE7"/>
    </source>
</evidence>
<evidence type="ECO:0000255" key="2">
    <source>
        <dbReference type="PROSITE-ProRule" id="PRU00464"/>
    </source>
</evidence>
<evidence type="ECO:0000305" key="3"/>
<name>HINT_SHIFL</name>
<feature type="chain" id="PRO_0000109832" description="Purine nucleoside phosphoramidase">
    <location>
        <begin position="1"/>
        <end position="119"/>
    </location>
</feature>
<feature type="domain" description="HIT" evidence="2">
    <location>
        <begin position="6"/>
        <end position="115"/>
    </location>
</feature>
<feature type="short sequence motif" description="Histidine triad motif" evidence="1">
    <location>
        <begin position="99"/>
        <end position="105"/>
    </location>
</feature>
<feature type="active site" description="Tele-AMP-histidine intermediate" evidence="1">
    <location>
        <position position="101"/>
    </location>
</feature>
<feature type="binding site" evidence="1">
    <location>
        <begin position="30"/>
        <end position="32"/>
    </location>
    <ligand>
        <name>GMP</name>
        <dbReference type="ChEBI" id="CHEBI:58115"/>
    </ligand>
</feature>
<feature type="binding site" evidence="1">
    <location>
        <position position="88"/>
    </location>
    <ligand>
        <name>GMP</name>
        <dbReference type="ChEBI" id="CHEBI:58115"/>
    </ligand>
</feature>
<feature type="binding site" evidence="1">
    <location>
        <begin position="96"/>
        <end position="97"/>
    </location>
    <ligand>
        <name>GMP</name>
        <dbReference type="ChEBI" id="CHEBI:58115"/>
    </ligand>
</feature>
<feature type="binding site" evidence="1">
    <location>
        <begin position="101"/>
        <end position="103"/>
    </location>
    <ligand>
        <name>GMP</name>
        <dbReference type="ChEBI" id="CHEBI:58115"/>
    </ligand>
</feature>
<dbReference type="EC" id="3.9.1.-" evidence="1"/>
<dbReference type="EMBL" id="AE005674">
    <property type="protein sequence ID" value="AAN42725.2"/>
    <property type="molecule type" value="Genomic_DNA"/>
</dbReference>
<dbReference type="EMBL" id="AE014073">
    <property type="protein sequence ID" value="AAP16613.1"/>
    <property type="molecule type" value="Genomic_DNA"/>
</dbReference>
<dbReference type="RefSeq" id="WP_000807125.1">
    <property type="nucleotide sequence ID" value="NZ_WPGW01000001.1"/>
</dbReference>
<dbReference type="SMR" id="P0ACE9"/>
<dbReference type="STRING" id="198214.SF1107"/>
<dbReference type="PaxDb" id="198214-SF1107"/>
<dbReference type="GeneID" id="93776305"/>
<dbReference type="KEGG" id="sfl:SF1107"/>
<dbReference type="KEGG" id="sfx:S1187"/>
<dbReference type="PATRIC" id="fig|198214.7.peg.1297"/>
<dbReference type="HOGENOM" id="CLU_056776_8_1_6"/>
<dbReference type="Proteomes" id="UP000001006">
    <property type="component" value="Chromosome"/>
</dbReference>
<dbReference type="Proteomes" id="UP000002673">
    <property type="component" value="Chromosome"/>
</dbReference>
<dbReference type="GO" id="GO:0016787">
    <property type="term" value="F:hydrolase activity"/>
    <property type="evidence" value="ECO:0007669"/>
    <property type="project" value="UniProtKB-KW"/>
</dbReference>
<dbReference type="GO" id="GO:0000166">
    <property type="term" value="F:nucleotide binding"/>
    <property type="evidence" value="ECO:0007669"/>
    <property type="project" value="UniProtKB-KW"/>
</dbReference>
<dbReference type="CDD" id="cd01276">
    <property type="entry name" value="PKCI_related"/>
    <property type="match status" value="1"/>
</dbReference>
<dbReference type="FunFam" id="3.30.428.10:FF:000003">
    <property type="entry name" value="Purine nucleoside phosphoramidase"/>
    <property type="match status" value="1"/>
</dbReference>
<dbReference type="Gene3D" id="3.30.428.10">
    <property type="entry name" value="HIT-like"/>
    <property type="match status" value="1"/>
</dbReference>
<dbReference type="InterPro" id="IPR019808">
    <property type="entry name" value="Histidine_triad_CS"/>
</dbReference>
<dbReference type="InterPro" id="IPR001310">
    <property type="entry name" value="Histidine_triad_HIT"/>
</dbReference>
<dbReference type="InterPro" id="IPR011146">
    <property type="entry name" value="HIT-like"/>
</dbReference>
<dbReference type="InterPro" id="IPR036265">
    <property type="entry name" value="HIT-like_sf"/>
</dbReference>
<dbReference type="NCBIfam" id="NF007965">
    <property type="entry name" value="PRK10687.1"/>
    <property type="match status" value="1"/>
</dbReference>
<dbReference type="PANTHER" id="PTHR23089">
    <property type="entry name" value="HISTIDINE TRIAD HIT PROTEIN"/>
    <property type="match status" value="1"/>
</dbReference>
<dbReference type="Pfam" id="PF01230">
    <property type="entry name" value="HIT"/>
    <property type="match status" value="1"/>
</dbReference>
<dbReference type="PRINTS" id="PR00332">
    <property type="entry name" value="HISTRIAD"/>
</dbReference>
<dbReference type="SUPFAM" id="SSF54197">
    <property type="entry name" value="HIT-like"/>
    <property type="match status" value="1"/>
</dbReference>
<dbReference type="PROSITE" id="PS00892">
    <property type="entry name" value="HIT_1"/>
    <property type="match status" value="1"/>
</dbReference>
<dbReference type="PROSITE" id="PS51084">
    <property type="entry name" value="HIT_2"/>
    <property type="match status" value="1"/>
</dbReference>
<reference key="1">
    <citation type="journal article" date="2002" name="Nucleic Acids Res.">
        <title>Genome sequence of Shigella flexneri 2a: insights into pathogenicity through comparison with genomes of Escherichia coli K12 and O157.</title>
        <authorList>
            <person name="Jin Q."/>
            <person name="Yuan Z."/>
            <person name="Xu J."/>
            <person name="Wang Y."/>
            <person name="Shen Y."/>
            <person name="Lu W."/>
            <person name="Wang J."/>
            <person name="Liu H."/>
            <person name="Yang J."/>
            <person name="Yang F."/>
            <person name="Zhang X."/>
            <person name="Zhang J."/>
            <person name="Yang G."/>
            <person name="Wu H."/>
            <person name="Qu D."/>
            <person name="Dong J."/>
            <person name="Sun L."/>
            <person name="Xue Y."/>
            <person name="Zhao A."/>
            <person name="Gao Y."/>
            <person name="Zhu J."/>
            <person name="Kan B."/>
            <person name="Ding K."/>
            <person name="Chen S."/>
            <person name="Cheng H."/>
            <person name="Yao Z."/>
            <person name="He B."/>
            <person name="Chen R."/>
            <person name="Ma D."/>
            <person name="Qiang B."/>
            <person name="Wen Y."/>
            <person name="Hou Y."/>
            <person name="Yu J."/>
        </authorList>
    </citation>
    <scope>NUCLEOTIDE SEQUENCE [LARGE SCALE GENOMIC DNA]</scope>
    <source>
        <strain>301 / Serotype 2a</strain>
    </source>
</reference>
<reference key="2">
    <citation type="journal article" date="2003" name="Infect. Immun.">
        <title>Complete genome sequence and comparative genomics of Shigella flexneri serotype 2a strain 2457T.</title>
        <authorList>
            <person name="Wei J."/>
            <person name="Goldberg M.B."/>
            <person name="Burland V."/>
            <person name="Venkatesan M.M."/>
            <person name="Deng W."/>
            <person name="Fournier G."/>
            <person name="Mayhew G.F."/>
            <person name="Plunkett G. III"/>
            <person name="Rose D.J."/>
            <person name="Darling A."/>
            <person name="Mau B."/>
            <person name="Perna N.T."/>
            <person name="Payne S.M."/>
            <person name="Runyen-Janecky L.J."/>
            <person name="Zhou S."/>
            <person name="Schwartz D.C."/>
            <person name="Blattner F.R."/>
        </authorList>
    </citation>
    <scope>NUCLEOTIDE SEQUENCE [LARGE SCALE GENOMIC DNA]</scope>
    <source>
        <strain>ATCC 700930 / 2457T / Serotype 2a</strain>
    </source>
</reference>
<sequence length="119" mass="13241">MAEETIFSKIIRREIPSDIVYQDDLVTAFRDISPQAPTHILIIPNILIPTVNDVSAEHEQALGRMITVAAKIAEQEGIAEDGYRLIMNTNRHGGQEVYHIHMHLLGGRPLGPMLAHKGL</sequence>
<comment type="function">
    <text evidence="1">Hydrolyzes purine nucleotide phosphoramidates, including adenosine 5'monophosphoramidate (AMP-NH2), adenosine 5'monophosphomorpholidate (AMP-morpholidate), guanosine 5'monophosphomorpholidate (GMP-morpholidate) and tryptamine 5'guanosine monophosphate (TpGd). Hydrolyzes lysyl-AMP (AMP-N-epsilon-(N-alpha-acetyl lysine methyl ester)) generated by lysine tRNA ligase and lysyl-GMP (GMP-N-epsilon-(N-alpha-acetyl lysine methyl ester)). Is essential for the activity of the enzyme D-alanine dehydrogenase (DadA).</text>
</comment>
<comment type="subunit">
    <text evidence="1">Homodimer.</text>
</comment>
<comment type="similarity">
    <text evidence="3">Belongs to the HINT family.</text>
</comment>
<organism>
    <name type="scientific">Shigella flexneri</name>
    <dbReference type="NCBI Taxonomy" id="623"/>
    <lineage>
        <taxon>Bacteria</taxon>
        <taxon>Pseudomonadati</taxon>
        <taxon>Pseudomonadota</taxon>
        <taxon>Gammaproteobacteria</taxon>
        <taxon>Enterobacterales</taxon>
        <taxon>Enterobacteriaceae</taxon>
        <taxon>Shigella</taxon>
    </lineage>
</organism>
<proteinExistence type="inferred from homology"/>
<accession>P0ACE9</accession>
<accession>P36950</accession>
<accession>P75945</accession>